<sequence>MHHQKQQQQQKQQGEAPCRHLQWRLSGVVLCVLVVASLVSTAASSPLDPHHLAKRSFFDIQCKGVYDKSIFARLDRICEDCYNLFREPQLHSLCRSDCFKSPYFKGCLQALLLIDEEEKFNQMVEILGKK</sequence>
<evidence type="ECO:0000250" key="1"/>
<evidence type="ECO:0000255" key="2"/>
<evidence type="ECO:0000305" key="3"/>
<accession>Q26491</accession>
<protein>
    <recommendedName>
        <fullName>Ion transport peptide</fullName>
        <shortName>ITP</shortName>
    </recommendedName>
</protein>
<dbReference type="EMBL" id="U36919">
    <property type="protein sequence ID" value="AAB16822.1"/>
    <property type="molecule type" value="mRNA"/>
</dbReference>
<dbReference type="RefSeq" id="XP_049859895.1">
    <property type="nucleotide sequence ID" value="XM_050003938.1"/>
</dbReference>
<dbReference type="RefSeq" id="XP_049859896.1">
    <property type="nucleotide sequence ID" value="XM_050003939.1"/>
</dbReference>
<dbReference type="SMR" id="Q26491"/>
<dbReference type="EnsemblMetazoa" id="XM_050003938.1">
    <property type="protein sequence ID" value="XP_049859895.1"/>
    <property type="gene ID" value="LOC126354358"/>
</dbReference>
<dbReference type="EnsemblMetazoa" id="XM_050003939.1">
    <property type="protein sequence ID" value="XP_049859896.1"/>
    <property type="gene ID" value="LOC126354358"/>
</dbReference>
<dbReference type="GeneID" id="126354358"/>
<dbReference type="OrthoDB" id="6365952at2759"/>
<dbReference type="GO" id="GO:0005576">
    <property type="term" value="C:extracellular region"/>
    <property type="evidence" value="ECO:0007669"/>
    <property type="project" value="UniProtKB-SubCell"/>
</dbReference>
<dbReference type="GO" id="GO:0005184">
    <property type="term" value="F:neuropeptide hormone activity"/>
    <property type="evidence" value="ECO:0007669"/>
    <property type="project" value="InterPro"/>
</dbReference>
<dbReference type="GO" id="GO:0007623">
    <property type="term" value="P:circadian rhythm"/>
    <property type="evidence" value="ECO:0007669"/>
    <property type="project" value="TreeGrafter"/>
</dbReference>
<dbReference type="GO" id="GO:0007218">
    <property type="term" value="P:neuropeptide signaling pathway"/>
    <property type="evidence" value="ECO:0007669"/>
    <property type="project" value="UniProtKB-KW"/>
</dbReference>
<dbReference type="FunFam" id="1.10.2010.10:FF:000001">
    <property type="entry name" value="Ion transport peptide isoform C"/>
    <property type="match status" value="1"/>
</dbReference>
<dbReference type="Gene3D" id="1.10.2010.10">
    <property type="entry name" value="Crustacean CHH/MIH/GIH neurohormone"/>
    <property type="match status" value="1"/>
</dbReference>
<dbReference type="InterPro" id="IPR018251">
    <property type="entry name" value="Crust_neurhormone_CS"/>
</dbReference>
<dbReference type="InterPro" id="IPR031098">
    <property type="entry name" value="Crust_neurohorm"/>
</dbReference>
<dbReference type="InterPro" id="IPR035957">
    <property type="entry name" value="Crust_neurohorm_sf"/>
</dbReference>
<dbReference type="InterPro" id="IPR001166">
    <property type="entry name" value="Hyperglycemic"/>
</dbReference>
<dbReference type="InterPro" id="IPR000346">
    <property type="entry name" value="Hyperglycemic1"/>
</dbReference>
<dbReference type="PANTHER" id="PTHR35981">
    <property type="entry name" value="ION TRANSPORT PEPTIDE, ISOFORM C"/>
    <property type="match status" value="1"/>
</dbReference>
<dbReference type="PANTHER" id="PTHR35981:SF2">
    <property type="entry name" value="ION TRANSPORT PEPTIDE, ISOFORM C"/>
    <property type="match status" value="1"/>
</dbReference>
<dbReference type="Pfam" id="PF01147">
    <property type="entry name" value="Crust_neurohorm"/>
    <property type="match status" value="1"/>
</dbReference>
<dbReference type="PRINTS" id="PR00548">
    <property type="entry name" value="HYPRGLYCEMC1"/>
</dbReference>
<dbReference type="PRINTS" id="PR00550">
    <property type="entry name" value="HYPRGLYCEMIC"/>
</dbReference>
<dbReference type="SUPFAM" id="SSF81778">
    <property type="entry name" value="Crustacean CHH/MIH/GIH neurohormone"/>
    <property type="match status" value="1"/>
</dbReference>
<dbReference type="PROSITE" id="PS01250">
    <property type="entry name" value="CHH_MIH_GIH"/>
    <property type="match status" value="1"/>
</dbReference>
<feature type="signal peptide" evidence="2">
    <location>
        <begin position="1"/>
        <end status="unknown"/>
    </location>
</feature>
<feature type="propeptide" id="PRO_0000019086">
    <location>
        <begin status="unknown"/>
        <end position="55"/>
    </location>
</feature>
<feature type="peptide" id="PRO_0000019087" description="Ion transport peptide">
    <location>
        <begin position="56"/>
        <end position="127"/>
    </location>
</feature>
<feature type="modified residue" description="Leucine amide" evidence="2">
    <location>
        <position position="127"/>
    </location>
</feature>
<feature type="disulfide bond" evidence="1">
    <location>
        <begin position="62"/>
        <end position="98"/>
    </location>
</feature>
<feature type="disulfide bond" evidence="1">
    <location>
        <begin position="78"/>
        <end position="94"/>
    </location>
</feature>
<feature type="disulfide bond" evidence="1">
    <location>
        <begin position="81"/>
        <end position="107"/>
    </location>
</feature>
<keyword id="KW-0027">Amidation</keyword>
<keyword id="KW-0165">Cleavage on pair of basic residues</keyword>
<keyword id="KW-1015">Disulfide bond</keyword>
<keyword id="KW-0372">Hormone</keyword>
<keyword id="KW-0527">Neuropeptide</keyword>
<keyword id="KW-0964">Secreted</keyword>
<keyword id="KW-0732">Signal</keyword>
<proteinExistence type="evidence at transcript level"/>
<organism>
    <name type="scientific">Schistocerca gregaria</name>
    <name type="common">Desert locust</name>
    <name type="synonym">Gryllus gregarius</name>
    <dbReference type="NCBI Taxonomy" id="7010"/>
    <lineage>
        <taxon>Eukaryota</taxon>
        <taxon>Metazoa</taxon>
        <taxon>Ecdysozoa</taxon>
        <taxon>Arthropoda</taxon>
        <taxon>Hexapoda</taxon>
        <taxon>Insecta</taxon>
        <taxon>Pterygota</taxon>
        <taxon>Neoptera</taxon>
        <taxon>Polyneoptera</taxon>
        <taxon>Orthoptera</taxon>
        <taxon>Caelifera</taxon>
        <taxon>Acrididea</taxon>
        <taxon>Acridomorpha</taxon>
        <taxon>Acridoidea</taxon>
        <taxon>Acrididae</taxon>
        <taxon>Cyrtacanthacridinae</taxon>
        <taxon>Schistocerca</taxon>
    </lineage>
</organism>
<name>ITP_SCHGR</name>
<reference key="1">
    <citation type="journal article" date="1996" name="J. Exp. Biol.">
        <title>Locust ion transport peptide (ITP): primary structure, cDNA and expression in a baculovirus system.</title>
        <authorList>
            <person name="Meredith J."/>
            <person name="Ring M."/>
            <person name="Macins A."/>
            <person name="Marschall J."/>
            <person name="Cheng N.N."/>
            <person name="Theilmann D."/>
            <person name="Brock H.W."/>
            <person name="Phillips J.E."/>
        </authorList>
    </citation>
    <scope>NUCLEOTIDE SEQUENCE [MRNA]</scope>
</reference>
<comment type="function">
    <text>Stimulates salt and water reabsorption and inhibits acid secretion in the ileum of S.gregaria.</text>
</comment>
<comment type="subcellular location">
    <subcellularLocation>
        <location>Secreted</location>
    </subcellularLocation>
</comment>
<comment type="tissue specificity">
    <text>Brain and corpus cardiacum.</text>
</comment>
<comment type="similarity">
    <text evidence="3">Belongs to the arthropod CHH/MIH/GIH/VIH hormone family.</text>
</comment>